<evidence type="ECO:0000255" key="1">
    <source>
        <dbReference type="HAMAP-Rule" id="MF_01318"/>
    </source>
</evidence>
<evidence type="ECO:0000305" key="2"/>
<protein>
    <recommendedName>
        <fullName evidence="1">Large ribosomal subunit protein uL1</fullName>
    </recommendedName>
    <alternativeName>
        <fullName evidence="2">50S ribosomal protein L1</fullName>
    </alternativeName>
</protein>
<organism>
    <name type="scientific">Sorangium cellulosum (strain So ce56)</name>
    <name type="common">Polyangium cellulosum (strain So ce56)</name>
    <dbReference type="NCBI Taxonomy" id="448385"/>
    <lineage>
        <taxon>Bacteria</taxon>
        <taxon>Pseudomonadati</taxon>
        <taxon>Myxococcota</taxon>
        <taxon>Polyangia</taxon>
        <taxon>Polyangiales</taxon>
        <taxon>Polyangiaceae</taxon>
        <taxon>Sorangium</taxon>
    </lineage>
</organism>
<sequence>MPKVAKKKVAARAVVDRARKYTLQEACALVKQAAPAKFDETVDLAVRLGVNPRHADQMVRGAVVLPHGTGQSLRVLVFAKGEKAKEAEAAGADFVGEADLVNKVQEGFMDFDRVIATPDMMGLVGKLGRILGPRGLMPNPKVGTVTFDVKTAVSEAKAGKVEYRVEKAGIVHARIGKVSFAENALHVNADALIQALVRAKPATAKGIYLRSITMSSTMGPGVRIDPVHFIGKTEEA</sequence>
<gene>
    <name evidence="1" type="primary">rplA</name>
    <name type="ordered locus">sce0407</name>
</gene>
<dbReference type="EMBL" id="AM746676">
    <property type="protein sequence ID" value="CAN90564.1"/>
    <property type="molecule type" value="Genomic_DNA"/>
</dbReference>
<dbReference type="RefSeq" id="WP_012233042.1">
    <property type="nucleotide sequence ID" value="NC_010162.1"/>
</dbReference>
<dbReference type="SMR" id="A9GRA4"/>
<dbReference type="STRING" id="448385.sce0407"/>
<dbReference type="KEGG" id="scl:sce0407"/>
<dbReference type="eggNOG" id="COG0081">
    <property type="taxonomic scope" value="Bacteria"/>
</dbReference>
<dbReference type="HOGENOM" id="CLU_062853_0_0_7"/>
<dbReference type="OrthoDB" id="9803740at2"/>
<dbReference type="BioCyc" id="SCEL448385:SCE_RS02145-MONOMER"/>
<dbReference type="Proteomes" id="UP000002139">
    <property type="component" value="Chromosome"/>
</dbReference>
<dbReference type="GO" id="GO:0022625">
    <property type="term" value="C:cytosolic large ribosomal subunit"/>
    <property type="evidence" value="ECO:0007669"/>
    <property type="project" value="TreeGrafter"/>
</dbReference>
<dbReference type="GO" id="GO:0019843">
    <property type="term" value="F:rRNA binding"/>
    <property type="evidence" value="ECO:0007669"/>
    <property type="project" value="UniProtKB-UniRule"/>
</dbReference>
<dbReference type="GO" id="GO:0003735">
    <property type="term" value="F:structural constituent of ribosome"/>
    <property type="evidence" value="ECO:0007669"/>
    <property type="project" value="InterPro"/>
</dbReference>
<dbReference type="GO" id="GO:0000049">
    <property type="term" value="F:tRNA binding"/>
    <property type="evidence" value="ECO:0007669"/>
    <property type="project" value="UniProtKB-KW"/>
</dbReference>
<dbReference type="GO" id="GO:0006417">
    <property type="term" value="P:regulation of translation"/>
    <property type="evidence" value="ECO:0007669"/>
    <property type="project" value="UniProtKB-KW"/>
</dbReference>
<dbReference type="GO" id="GO:0006412">
    <property type="term" value="P:translation"/>
    <property type="evidence" value="ECO:0007669"/>
    <property type="project" value="UniProtKB-UniRule"/>
</dbReference>
<dbReference type="CDD" id="cd00403">
    <property type="entry name" value="Ribosomal_L1"/>
    <property type="match status" value="1"/>
</dbReference>
<dbReference type="FunFam" id="3.40.50.790:FF:000001">
    <property type="entry name" value="50S ribosomal protein L1"/>
    <property type="match status" value="1"/>
</dbReference>
<dbReference type="Gene3D" id="3.30.190.20">
    <property type="match status" value="1"/>
</dbReference>
<dbReference type="Gene3D" id="3.40.50.790">
    <property type="match status" value="1"/>
</dbReference>
<dbReference type="HAMAP" id="MF_01318_B">
    <property type="entry name" value="Ribosomal_uL1_B"/>
    <property type="match status" value="1"/>
</dbReference>
<dbReference type="InterPro" id="IPR005878">
    <property type="entry name" value="Ribosom_uL1_bac-type"/>
</dbReference>
<dbReference type="InterPro" id="IPR002143">
    <property type="entry name" value="Ribosomal_uL1"/>
</dbReference>
<dbReference type="InterPro" id="IPR023674">
    <property type="entry name" value="Ribosomal_uL1-like"/>
</dbReference>
<dbReference type="InterPro" id="IPR028364">
    <property type="entry name" value="Ribosomal_uL1/biogenesis"/>
</dbReference>
<dbReference type="InterPro" id="IPR016095">
    <property type="entry name" value="Ribosomal_uL1_3-a/b-sand"/>
</dbReference>
<dbReference type="InterPro" id="IPR023673">
    <property type="entry name" value="Ribosomal_uL1_CS"/>
</dbReference>
<dbReference type="NCBIfam" id="TIGR01169">
    <property type="entry name" value="rplA_bact"/>
    <property type="match status" value="1"/>
</dbReference>
<dbReference type="PANTHER" id="PTHR36427">
    <property type="entry name" value="54S RIBOSOMAL PROTEIN L1, MITOCHONDRIAL"/>
    <property type="match status" value="1"/>
</dbReference>
<dbReference type="PANTHER" id="PTHR36427:SF3">
    <property type="entry name" value="LARGE RIBOSOMAL SUBUNIT PROTEIN UL1M"/>
    <property type="match status" value="1"/>
</dbReference>
<dbReference type="Pfam" id="PF00687">
    <property type="entry name" value="Ribosomal_L1"/>
    <property type="match status" value="1"/>
</dbReference>
<dbReference type="PIRSF" id="PIRSF002155">
    <property type="entry name" value="Ribosomal_L1"/>
    <property type="match status" value="1"/>
</dbReference>
<dbReference type="SUPFAM" id="SSF56808">
    <property type="entry name" value="Ribosomal protein L1"/>
    <property type="match status" value="1"/>
</dbReference>
<dbReference type="PROSITE" id="PS01199">
    <property type="entry name" value="RIBOSOMAL_L1"/>
    <property type="match status" value="1"/>
</dbReference>
<comment type="function">
    <text evidence="1">Binds directly to 23S rRNA. The L1 stalk is quite mobile in the ribosome, and is involved in E site tRNA release.</text>
</comment>
<comment type="function">
    <text evidence="1">Protein L1 is also a translational repressor protein, it controls the translation of the L11 operon by binding to its mRNA.</text>
</comment>
<comment type="subunit">
    <text evidence="1">Part of the 50S ribosomal subunit.</text>
</comment>
<comment type="similarity">
    <text evidence="1">Belongs to the universal ribosomal protein uL1 family.</text>
</comment>
<feature type="chain" id="PRO_1000086309" description="Large ribosomal subunit protein uL1">
    <location>
        <begin position="1"/>
        <end position="236"/>
    </location>
</feature>
<name>RL1_SORC5</name>
<accession>A9GRA4</accession>
<proteinExistence type="inferred from homology"/>
<reference key="1">
    <citation type="journal article" date="2007" name="Nat. Biotechnol.">
        <title>Complete genome sequence of the myxobacterium Sorangium cellulosum.</title>
        <authorList>
            <person name="Schneiker S."/>
            <person name="Perlova O."/>
            <person name="Kaiser O."/>
            <person name="Gerth K."/>
            <person name="Alici A."/>
            <person name="Altmeyer M.O."/>
            <person name="Bartels D."/>
            <person name="Bekel T."/>
            <person name="Beyer S."/>
            <person name="Bode E."/>
            <person name="Bode H.B."/>
            <person name="Bolten C.J."/>
            <person name="Choudhuri J.V."/>
            <person name="Doss S."/>
            <person name="Elnakady Y.A."/>
            <person name="Frank B."/>
            <person name="Gaigalat L."/>
            <person name="Goesmann A."/>
            <person name="Groeger C."/>
            <person name="Gross F."/>
            <person name="Jelsbak L."/>
            <person name="Jelsbak L."/>
            <person name="Kalinowski J."/>
            <person name="Kegler C."/>
            <person name="Knauber T."/>
            <person name="Konietzny S."/>
            <person name="Kopp M."/>
            <person name="Krause L."/>
            <person name="Krug D."/>
            <person name="Linke B."/>
            <person name="Mahmud T."/>
            <person name="Martinez-Arias R."/>
            <person name="McHardy A.C."/>
            <person name="Merai M."/>
            <person name="Meyer F."/>
            <person name="Mormann S."/>
            <person name="Munoz-Dorado J."/>
            <person name="Perez J."/>
            <person name="Pradella S."/>
            <person name="Rachid S."/>
            <person name="Raddatz G."/>
            <person name="Rosenau F."/>
            <person name="Rueckert C."/>
            <person name="Sasse F."/>
            <person name="Scharfe M."/>
            <person name="Schuster S.C."/>
            <person name="Suen G."/>
            <person name="Treuner-Lange A."/>
            <person name="Velicer G.J."/>
            <person name="Vorholter F.-J."/>
            <person name="Weissman K.J."/>
            <person name="Welch R.D."/>
            <person name="Wenzel S.C."/>
            <person name="Whitworth D.E."/>
            <person name="Wilhelm S."/>
            <person name="Wittmann C."/>
            <person name="Bloecker H."/>
            <person name="Puehler A."/>
            <person name="Mueller R."/>
        </authorList>
    </citation>
    <scope>NUCLEOTIDE SEQUENCE [LARGE SCALE GENOMIC DNA]</scope>
    <source>
        <strain>So ce56</strain>
    </source>
</reference>
<keyword id="KW-1185">Reference proteome</keyword>
<keyword id="KW-0678">Repressor</keyword>
<keyword id="KW-0687">Ribonucleoprotein</keyword>
<keyword id="KW-0689">Ribosomal protein</keyword>
<keyword id="KW-0694">RNA-binding</keyword>
<keyword id="KW-0699">rRNA-binding</keyword>
<keyword id="KW-0810">Translation regulation</keyword>
<keyword id="KW-0820">tRNA-binding</keyword>